<sequence length="176" mass="19693">MRFFLCSIFMMISPIWPLGENPLPGDPYVIVNKRTNELAVILDNKVEGVYSVATGKTDDLTPEGEFSVTVKAENPYYRKKNIEGGSPDNPLGARWIGFDAKGTDGRIYGIHGTNREESVGKFVSNGCIRMHNDEVVHLFQTIPVGTRVLITDDNRSFEEIAIEHKALIKKQDIPIE</sequence>
<name>YQJB_BACSU</name>
<gene>
    <name type="primary">yqjB</name>
    <name type="ordered locus">BSU23940</name>
</gene>
<protein>
    <recommendedName>
        <fullName>Putative L,D-transpeptidase YqjB</fullName>
        <ecNumber>2.-.-.-</ecNumber>
    </recommendedName>
</protein>
<dbReference type="EC" id="2.-.-.-"/>
<dbReference type="EMBL" id="D84432">
    <property type="protein sequence ID" value="BAA12608.1"/>
    <property type="molecule type" value="Genomic_DNA"/>
</dbReference>
<dbReference type="EMBL" id="AL009126">
    <property type="protein sequence ID" value="CAB14325.1"/>
    <property type="molecule type" value="Genomic_DNA"/>
</dbReference>
<dbReference type="PIR" id="B69963">
    <property type="entry name" value="B69963"/>
</dbReference>
<dbReference type="RefSeq" id="NP_390274.1">
    <property type="nucleotide sequence ID" value="NC_000964.3"/>
</dbReference>
<dbReference type="RefSeq" id="WP_004398604.1">
    <property type="nucleotide sequence ID" value="NZ_OZ025638.1"/>
</dbReference>
<dbReference type="SMR" id="P54539"/>
<dbReference type="FunCoup" id="P54539">
    <property type="interactions" value="113"/>
</dbReference>
<dbReference type="STRING" id="224308.BSU23940"/>
<dbReference type="PaxDb" id="224308-BSU23940"/>
<dbReference type="EnsemblBacteria" id="CAB14325">
    <property type="protein sequence ID" value="CAB14325"/>
    <property type="gene ID" value="BSU_23940"/>
</dbReference>
<dbReference type="GeneID" id="938684"/>
<dbReference type="KEGG" id="bsu:BSU23940"/>
<dbReference type="PATRIC" id="fig|224308.179.peg.2608"/>
<dbReference type="eggNOG" id="COG1376">
    <property type="taxonomic scope" value="Bacteria"/>
</dbReference>
<dbReference type="InParanoid" id="P54539"/>
<dbReference type="OrthoDB" id="9787225at2"/>
<dbReference type="PhylomeDB" id="P54539"/>
<dbReference type="BioCyc" id="BSUB:BSU23940-MONOMER"/>
<dbReference type="UniPathway" id="UPA00219"/>
<dbReference type="Proteomes" id="UP000001570">
    <property type="component" value="Chromosome"/>
</dbReference>
<dbReference type="GO" id="GO:0016757">
    <property type="term" value="F:glycosyltransferase activity"/>
    <property type="evidence" value="ECO:0007669"/>
    <property type="project" value="UniProtKB-KW"/>
</dbReference>
<dbReference type="GO" id="GO:0071972">
    <property type="term" value="F:peptidoglycan L,D-transpeptidase activity"/>
    <property type="evidence" value="ECO:0000318"/>
    <property type="project" value="GO_Central"/>
</dbReference>
<dbReference type="GO" id="GO:0071555">
    <property type="term" value="P:cell wall organization"/>
    <property type="evidence" value="ECO:0007669"/>
    <property type="project" value="UniProtKB-KW"/>
</dbReference>
<dbReference type="GO" id="GO:0018104">
    <property type="term" value="P:peptidoglycan-protein cross-linking"/>
    <property type="evidence" value="ECO:0000318"/>
    <property type="project" value="GO_Central"/>
</dbReference>
<dbReference type="GO" id="GO:0008360">
    <property type="term" value="P:regulation of cell shape"/>
    <property type="evidence" value="ECO:0007669"/>
    <property type="project" value="UniProtKB-KW"/>
</dbReference>
<dbReference type="CDD" id="cd16913">
    <property type="entry name" value="YkuD_like"/>
    <property type="match status" value="1"/>
</dbReference>
<dbReference type="FunFam" id="2.40.440.10:FF:000003">
    <property type="entry name" value="L,D-transpeptidase YciB"/>
    <property type="match status" value="1"/>
</dbReference>
<dbReference type="Gene3D" id="2.40.440.10">
    <property type="entry name" value="L,D-transpeptidase catalytic domain-like"/>
    <property type="match status" value="1"/>
</dbReference>
<dbReference type="InterPro" id="IPR050979">
    <property type="entry name" value="LD-transpeptidase"/>
</dbReference>
<dbReference type="InterPro" id="IPR005490">
    <property type="entry name" value="LD_TPept_cat_dom"/>
</dbReference>
<dbReference type="InterPro" id="IPR038063">
    <property type="entry name" value="Transpep_catalytic_dom"/>
</dbReference>
<dbReference type="PANTHER" id="PTHR30582">
    <property type="entry name" value="L,D-TRANSPEPTIDASE"/>
    <property type="match status" value="1"/>
</dbReference>
<dbReference type="PANTHER" id="PTHR30582:SF4">
    <property type="entry name" value="L,D-TRANSPEPTIDASE YQJB-RELATED"/>
    <property type="match status" value="1"/>
</dbReference>
<dbReference type="Pfam" id="PF03734">
    <property type="entry name" value="YkuD"/>
    <property type="match status" value="1"/>
</dbReference>
<dbReference type="SUPFAM" id="SSF141523">
    <property type="entry name" value="L,D-transpeptidase catalytic domain-like"/>
    <property type="match status" value="1"/>
</dbReference>
<dbReference type="PROSITE" id="PS52029">
    <property type="entry name" value="LD_TPASE"/>
    <property type="match status" value="1"/>
</dbReference>
<accession>P54539</accession>
<comment type="pathway">
    <text>Cell wall biogenesis; peptidoglycan biosynthesis.</text>
</comment>
<comment type="similarity">
    <text evidence="3">Belongs to the YkuD family.</text>
</comment>
<proteinExistence type="inferred from homology"/>
<reference key="1">
    <citation type="journal article" date="1996" name="Microbiology">
        <title>Systematic sequencing of the 283 kb 210 degrees-232 degrees region of the Bacillus subtilis genome containing the skin element and many sporulation genes.</title>
        <authorList>
            <person name="Mizuno M."/>
            <person name="Masuda S."/>
            <person name="Takemaru K."/>
            <person name="Hosono S."/>
            <person name="Sato T."/>
            <person name="Takeuchi M."/>
            <person name="Kobayashi Y."/>
        </authorList>
    </citation>
    <scope>NUCLEOTIDE SEQUENCE [GENOMIC DNA]</scope>
    <source>
        <strain>168 / JH642</strain>
    </source>
</reference>
<reference key="2">
    <citation type="journal article" date="1997" name="Nature">
        <title>The complete genome sequence of the Gram-positive bacterium Bacillus subtilis.</title>
        <authorList>
            <person name="Kunst F."/>
            <person name="Ogasawara N."/>
            <person name="Moszer I."/>
            <person name="Albertini A.M."/>
            <person name="Alloni G."/>
            <person name="Azevedo V."/>
            <person name="Bertero M.G."/>
            <person name="Bessieres P."/>
            <person name="Bolotin A."/>
            <person name="Borchert S."/>
            <person name="Borriss R."/>
            <person name="Boursier L."/>
            <person name="Brans A."/>
            <person name="Braun M."/>
            <person name="Brignell S.C."/>
            <person name="Bron S."/>
            <person name="Brouillet S."/>
            <person name="Bruschi C.V."/>
            <person name="Caldwell B."/>
            <person name="Capuano V."/>
            <person name="Carter N.M."/>
            <person name="Choi S.-K."/>
            <person name="Codani J.-J."/>
            <person name="Connerton I.F."/>
            <person name="Cummings N.J."/>
            <person name="Daniel R.A."/>
            <person name="Denizot F."/>
            <person name="Devine K.M."/>
            <person name="Duesterhoeft A."/>
            <person name="Ehrlich S.D."/>
            <person name="Emmerson P.T."/>
            <person name="Entian K.-D."/>
            <person name="Errington J."/>
            <person name="Fabret C."/>
            <person name="Ferrari E."/>
            <person name="Foulger D."/>
            <person name="Fritz C."/>
            <person name="Fujita M."/>
            <person name="Fujita Y."/>
            <person name="Fuma S."/>
            <person name="Galizzi A."/>
            <person name="Galleron N."/>
            <person name="Ghim S.-Y."/>
            <person name="Glaser P."/>
            <person name="Goffeau A."/>
            <person name="Golightly E.J."/>
            <person name="Grandi G."/>
            <person name="Guiseppi G."/>
            <person name="Guy B.J."/>
            <person name="Haga K."/>
            <person name="Haiech J."/>
            <person name="Harwood C.R."/>
            <person name="Henaut A."/>
            <person name="Hilbert H."/>
            <person name="Holsappel S."/>
            <person name="Hosono S."/>
            <person name="Hullo M.-F."/>
            <person name="Itaya M."/>
            <person name="Jones L.-M."/>
            <person name="Joris B."/>
            <person name="Karamata D."/>
            <person name="Kasahara Y."/>
            <person name="Klaerr-Blanchard M."/>
            <person name="Klein C."/>
            <person name="Kobayashi Y."/>
            <person name="Koetter P."/>
            <person name="Koningstein G."/>
            <person name="Krogh S."/>
            <person name="Kumano M."/>
            <person name="Kurita K."/>
            <person name="Lapidus A."/>
            <person name="Lardinois S."/>
            <person name="Lauber J."/>
            <person name="Lazarevic V."/>
            <person name="Lee S.-M."/>
            <person name="Levine A."/>
            <person name="Liu H."/>
            <person name="Masuda S."/>
            <person name="Mauel C."/>
            <person name="Medigue C."/>
            <person name="Medina N."/>
            <person name="Mellado R.P."/>
            <person name="Mizuno M."/>
            <person name="Moestl D."/>
            <person name="Nakai S."/>
            <person name="Noback M."/>
            <person name="Noone D."/>
            <person name="O'Reilly M."/>
            <person name="Ogawa K."/>
            <person name="Ogiwara A."/>
            <person name="Oudega B."/>
            <person name="Park S.-H."/>
            <person name="Parro V."/>
            <person name="Pohl T.M."/>
            <person name="Portetelle D."/>
            <person name="Porwollik S."/>
            <person name="Prescott A.M."/>
            <person name="Presecan E."/>
            <person name="Pujic P."/>
            <person name="Purnelle B."/>
            <person name="Rapoport G."/>
            <person name="Rey M."/>
            <person name="Reynolds S."/>
            <person name="Rieger M."/>
            <person name="Rivolta C."/>
            <person name="Rocha E."/>
            <person name="Roche B."/>
            <person name="Rose M."/>
            <person name="Sadaie Y."/>
            <person name="Sato T."/>
            <person name="Scanlan E."/>
            <person name="Schleich S."/>
            <person name="Schroeter R."/>
            <person name="Scoffone F."/>
            <person name="Sekiguchi J."/>
            <person name="Sekowska A."/>
            <person name="Seror S.J."/>
            <person name="Serror P."/>
            <person name="Shin B.-S."/>
            <person name="Soldo B."/>
            <person name="Sorokin A."/>
            <person name="Tacconi E."/>
            <person name="Takagi T."/>
            <person name="Takahashi H."/>
            <person name="Takemaru K."/>
            <person name="Takeuchi M."/>
            <person name="Tamakoshi A."/>
            <person name="Tanaka T."/>
            <person name="Terpstra P."/>
            <person name="Tognoni A."/>
            <person name="Tosato V."/>
            <person name="Uchiyama S."/>
            <person name="Vandenbol M."/>
            <person name="Vannier F."/>
            <person name="Vassarotti A."/>
            <person name="Viari A."/>
            <person name="Wambutt R."/>
            <person name="Wedler E."/>
            <person name="Wedler H."/>
            <person name="Weitzenegger T."/>
            <person name="Winters P."/>
            <person name="Wipat A."/>
            <person name="Yamamoto H."/>
            <person name="Yamane K."/>
            <person name="Yasumoto K."/>
            <person name="Yata K."/>
            <person name="Yoshida K."/>
            <person name="Yoshikawa H.-F."/>
            <person name="Zumstein E."/>
            <person name="Yoshikawa H."/>
            <person name="Danchin A."/>
        </authorList>
    </citation>
    <scope>NUCLEOTIDE SEQUENCE [LARGE SCALE GENOMIC DNA]</scope>
    <source>
        <strain>168</strain>
    </source>
</reference>
<organism>
    <name type="scientific">Bacillus subtilis (strain 168)</name>
    <dbReference type="NCBI Taxonomy" id="224308"/>
    <lineage>
        <taxon>Bacteria</taxon>
        <taxon>Bacillati</taxon>
        <taxon>Bacillota</taxon>
        <taxon>Bacilli</taxon>
        <taxon>Bacillales</taxon>
        <taxon>Bacillaceae</taxon>
        <taxon>Bacillus</taxon>
    </lineage>
</organism>
<keyword id="KW-0133">Cell shape</keyword>
<keyword id="KW-0961">Cell wall biogenesis/degradation</keyword>
<keyword id="KW-0328">Glycosyltransferase</keyword>
<keyword id="KW-0378">Hydrolase</keyword>
<keyword id="KW-0573">Peptidoglycan synthesis</keyword>
<keyword id="KW-1185">Reference proteome</keyword>
<keyword id="KW-0732">Signal</keyword>
<keyword id="KW-0808">Transferase</keyword>
<evidence type="ECO:0000255" key="1"/>
<evidence type="ECO:0000255" key="2">
    <source>
        <dbReference type="PROSITE-ProRule" id="PRU01373"/>
    </source>
</evidence>
<evidence type="ECO:0000305" key="3"/>
<feature type="signal peptide" evidence="1">
    <location>
        <begin position="1"/>
        <end position="25"/>
    </location>
</feature>
<feature type="chain" id="PRO_0000049829" description="Putative L,D-transpeptidase YqjB">
    <location>
        <begin position="26"/>
        <end position="176"/>
    </location>
</feature>
<feature type="domain" description="L,D-TPase catalytic" evidence="2">
    <location>
        <begin position="27"/>
        <end position="151"/>
    </location>
</feature>
<feature type="active site" description="Proton donor/acceptor" evidence="2">
    <location>
        <position position="111"/>
    </location>
</feature>
<feature type="active site" description="Nucleophile" evidence="2">
    <location>
        <position position="127"/>
    </location>
</feature>